<protein>
    <recommendedName>
        <fullName evidence="1">ATP synthase subunit b</fullName>
    </recommendedName>
    <alternativeName>
        <fullName evidence="1">ATP synthase F(0) sector subunit b</fullName>
    </alternativeName>
    <alternativeName>
        <fullName evidence="1">ATPase subunit I</fullName>
    </alternativeName>
    <alternativeName>
        <fullName evidence="1">F-type ATPase subunit b</fullName>
        <shortName evidence="1">F-ATPase subunit b</shortName>
    </alternativeName>
</protein>
<gene>
    <name evidence="1" type="primary">atpF</name>
</gene>
<sequence>MLWKANVWVLGEAAHGISGGTIIYQLLMFIILLALLRKFAWQPLMNIMKQREEHIANEIDQAEKRRQEAEKLLEEQRELMKQSRQDDEALIENARKLAQEQKEQIVASARGQAERVKEAAKKEIEREKEQAMAALREQVASLSVVIASKVIEKELTEQDPAS</sequence>
<keyword id="KW-0066">ATP synthesis</keyword>
<keyword id="KW-1003">Cell membrane</keyword>
<keyword id="KW-0138">CF(0)</keyword>
<keyword id="KW-0375">Hydrogen ion transport</keyword>
<keyword id="KW-0406">Ion transport</keyword>
<keyword id="KW-0472">Membrane</keyword>
<keyword id="KW-0812">Transmembrane</keyword>
<keyword id="KW-1133">Transmembrane helix</keyword>
<keyword id="KW-0813">Transport</keyword>
<comment type="function">
    <text evidence="1">F(1)F(0) ATP synthase produces ATP from ADP in the presence of a proton or sodium gradient. F-type ATPases consist of two structural domains, F(1) containing the extramembraneous catalytic core and F(0) containing the membrane proton channel, linked together by a central stalk and a peripheral stalk. During catalysis, ATP synthesis in the catalytic domain of F(1) is coupled via a rotary mechanism of the central stalk subunits to proton translocation.</text>
</comment>
<comment type="function">
    <text evidence="1">Component of the F(0) channel, it forms part of the peripheral stalk, linking F(1) to F(0).</text>
</comment>
<comment type="subunit">
    <text evidence="1">F-type ATPases have 2 components, F(1) - the catalytic core - and F(0) - the membrane proton channel. F(1) has five subunits: alpha(3), beta(3), gamma(1), delta(1), epsilon(1). F(0) has three main subunits: a(1), b(2) and c(10-14). The alpha and beta chains form an alternating ring which encloses part of the gamma chain. F(1) is attached to F(0) by a central stalk formed by the gamma and epsilon chains, while a peripheral stalk is formed by the delta and b chains.</text>
</comment>
<comment type="subcellular location">
    <subcellularLocation>
        <location evidence="1">Cell membrane</location>
        <topology evidence="1">Single-pass membrane protein</topology>
    </subcellularLocation>
</comment>
<comment type="similarity">
    <text evidence="1">Belongs to the ATPase B chain family.</text>
</comment>
<name>ATPF_BACCA</name>
<organism>
    <name type="scientific">Bacillus caldotenax</name>
    <dbReference type="NCBI Taxonomy" id="1395"/>
    <lineage>
        <taxon>Bacteria</taxon>
        <taxon>Bacillati</taxon>
        <taxon>Bacillota</taxon>
        <taxon>Bacilli</taxon>
        <taxon>Bacillales</taxon>
        <taxon>Anoxybacillaceae</taxon>
        <taxon>Geobacillus</taxon>
        <taxon>Geobacillus thermoleovorans group</taxon>
    </lineage>
</organism>
<accession>P41014</accession>
<dbReference type="EMBL" id="D38057">
    <property type="protein sequence ID" value="BAA07245.1"/>
    <property type="molecule type" value="Genomic_DNA"/>
</dbReference>
<dbReference type="SMR" id="P41014"/>
<dbReference type="GO" id="GO:0005886">
    <property type="term" value="C:plasma membrane"/>
    <property type="evidence" value="ECO:0007669"/>
    <property type="project" value="UniProtKB-SubCell"/>
</dbReference>
<dbReference type="GO" id="GO:0045259">
    <property type="term" value="C:proton-transporting ATP synthase complex"/>
    <property type="evidence" value="ECO:0007669"/>
    <property type="project" value="UniProtKB-KW"/>
</dbReference>
<dbReference type="GO" id="GO:0046933">
    <property type="term" value="F:proton-transporting ATP synthase activity, rotational mechanism"/>
    <property type="evidence" value="ECO:0007669"/>
    <property type="project" value="UniProtKB-UniRule"/>
</dbReference>
<dbReference type="GO" id="GO:0046961">
    <property type="term" value="F:proton-transporting ATPase activity, rotational mechanism"/>
    <property type="evidence" value="ECO:0007669"/>
    <property type="project" value="TreeGrafter"/>
</dbReference>
<dbReference type="CDD" id="cd06503">
    <property type="entry name" value="ATP-synt_Fo_b"/>
    <property type="match status" value="1"/>
</dbReference>
<dbReference type="HAMAP" id="MF_01398">
    <property type="entry name" value="ATP_synth_b_bprime"/>
    <property type="match status" value="1"/>
</dbReference>
<dbReference type="InterPro" id="IPR028987">
    <property type="entry name" value="ATP_synth_B-like_membr_sf"/>
</dbReference>
<dbReference type="InterPro" id="IPR002146">
    <property type="entry name" value="ATP_synth_b/b'su_bac/chlpt"/>
</dbReference>
<dbReference type="InterPro" id="IPR005864">
    <property type="entry name" value="ATP_synth_F0_bsu_bac"/>
</dbReference>
<dbReference type="InterPro" id="IPR050059">
    <property type="entry name" value="ATP_synthase_B_chain"/>
</dbReference>
<dbReference type="NCBIfam" id="TIGR01144">
    <property type="entry name" value="ATP_synt_b"/>
    <property type="match status" value="1"/>
</dbReference>
<dbReference type="PANTHER" id="PTHR33445:SF1">
    <property type="entry name" value="ATP SYNTHASE SUBUNIT B"/>
    <property type="match status" value="1"/>
</dbReference>
<dbReference type="PANTHER" id="PTHR33445">
    <property type="entry name" value="ATP SYNTHASE SUBUNIT B', CHLOROPLASTIC"/>
    <property type="match status" value="1"/>
</dbReference>
<dbReference type="Pfam" id="PF00430">
    <property type="entry name" value="ATP-synt_B"/>
    <property type="match status" value="1"/>
</dbReference>
<dbReference type="SUPFAM" id="SSF81573">
    <property type="entry name" value="F1F0 ATP synthase subunit B, membrane domain"/>
    <property type="match status" value="1"/>
</dbReference>
<reference key="1">
    <citation type="submission" date="1994-08" db="EMBL/GenBank/DDBJ databases">
        <title>Nucleotide sequence of the gene for subunits of proton-ATPase from Bacillus caldotenax.</title>
        <authorList>
            <person name="Ishizuka M."/>
        </authorList>
    </citation>
    <scope>NUCLEOTIDE SEQUENCE [GENOMIC DNA]</scope>
</reference>
<evidence type="ECO:0000255" key="1">
    <source>
        <dbReference type="HAMAP-Rule" id="MF_01398"/>
    </source>
</evidence>
<feature type="chain" id="PRO_0000082362" description="ATP synthase subunit b">
    <location>
        <begin position="1"/>
        <end position="162"/>
    </location>
</feature>
<feature type="transmembrane region" description="Helical" evidence="1">
    <location>
        <begin position="16"/>
        <end position="36"/>
    </location>
</feature>
<proteinExistence type="inferred from homology"/>